<organism>
    <name type="scientific">Enterococcus faecalis (strain ATCC 700802 / V583)</name>
    <dbReference type="NCBI Taxonomy" id="226185"/>
    <lineage>
        <taxon>Bacteria</taxon>
        <taxon>Bacillati</taxon>
        <taxon>Bacillota</taxon>
        <taxon>Bacilli</taxon>
        <taxon>Lactobacillales</taxon>
        <taxon>Enterococcaceae</taxon>
        <taxon>Enterococcus</taxon>
    </lineage>
</organism>
<gene>
    <name evidence="1" type="primary">xseB</name>
    <name type="ordered locus">EF_0980</name>
</gene>
<accession>Q836W5</accession>
<dbReference type="EC" id="3.1.11.6" evidence="1"/>
<dbReference type="EMBL" id="AE016830">
    <property type="protein sequence ID" value="AAO80786.1"/>
    <property type="molecule type" value="Genomic_DNA"/>
</dbReference>
<dbReference type="RefSeq" id="NP_814716.1">
    <property type="nucleotide sequence ID" value="NC_004668.1"/>
</dbReference>
<dbReference type="RefSeq" id="WP_002355878.1">
    <property type="nucleotide sequence ID" value="NZ_KE136527.1"/>
</dbReference>
<dbReference type="SMR" id="Q836W5"/>
<dbReference type="STRING" id="226185.EF_0980"/>
<dbReference type="DNASU" id="1199868"/>
<dbReference type="EnsemblBacteria" id="AAO80786">
    <property type="protein sequence ID" value="AAO80786"/>
    <property type="gene ID" value="EF_0980"/>
</dbReference>
<dbReference type="KEGG" id="efa:EF0980"/>
<dbReference type="PATRIC" id="fig|226185.45.peg.3186"/>
<dbReference type="eggNOG" id="COG1722">
    <property type="taxonomic scope" value="Bacteria"/>
</dbReference>
<dbReference type="HOGENOM" id="CLU_145918_3_2_9"/>
<dbReference type="Proteomes" id="UP000001415">
    <property type="component" value="Chromosome"/>
</dbReference>
<dbReference type="GO" id="GO:0005829">
    <property type="term" value="C:cytosol"/>
    <property type="evidence" value="ECO:0007669"/>
    <property type="project" value="TreeGrafter"/>
</dbReference>
<dbReference type="GO" id="GO:0009318">
    <property type="term" value="C:exodeoxyribonuclease VII complex"/>
    <property type="evidence" value="ECO:0007669"/>
    <property type="project" value="InterPro"/>
</dbReference>
<dbReference type="GO" id="GO:0008855">
    <property type="term" value="F:exodeoxyribonuclease VII activity"/>
    <property type="evidence" value="ECO:0007669"/>
    <property type="project" value="UniProtKB-UniRule"/>
</dbReference>
<dbReference type="GO" id="GO:0006308">
    <property type="term" value="P:DNA catabolic process"/>
    <property type="evidence" value="ECO:0007669"/>
    <property type="project" value="UniProtKB-UniRule"/>
</dbReference>
<dbReference type="Gene3D" id="1.10.287.1040">
    <property type="entry name" value="Exonuclease VII, small subunit"/>
    <property type="match status" value="1"/>
</dbReference>
<dbReference type="HAMAP" id="MF_00337">
    <property type="entry name" value="Exonuc_7_S"/>
    <property type="match status" value="1"/>
</dbReference>
<dbReference type="InterPro" id="IPR003761">
    <property type="entry name" value="Exonuc_VII_S"/>
</dbReference>
<dbReference type="InterPro" id="IPR037004">
    <property type="entry name" value="Exonuc_VII_ssu_sf"/>
</dbReference>
<dbReference type="NCBIfam" id="NF002138">
    <property type="entry name" value="PRK00977.1-2"/>
    <property type="match status" value="1"/>
</dbReference>
<dbReference type="NCBIfam" id="TIGR01280">
    <property type="entry name" value="xseB"/>
    <property type="match status" value="1"/>
</dbReference>
<dbReference type="PANTHER" id="PTHR34137">
    <property type="entry name" value="EXODEOXYRIBONUCLEASE 7 SMALL SUBUNIT"/>
    <property type="match status" value="1"/>
</dbReference>
<dbReference type="PANTHER" id="PTHR34137:SF1">
    <property type="entry name" value="EXODEOXYRIBONUCLEASE 7 SMALL SUBUNIT"/>
    <property type="match status" value="1"/>
</dbReference>
<dbReference type="Pfam" id="PF02609">
    <property type="entry name" value="Exonuc_VII_S"/>
    <property type="match status" value="1"/>
</dbReference>
<dbReference type="PIRSF" id="PIRSF006488">
    <property type="entry name" value="Exonuc_VII_S"/>
    <property type="match status" value="1"/>
</dbReference>
<dbReference type="SUPFAM" id="SSF116842">
    <property type="entry name" value="XseB-like"/>
    <property type="match status" value="1"/>
</dbReference>
<name>EX7S_ENTFA</name>
<keyword id="KW-0963">Cytoplasm</keyword>
<keyword id="KW-0269">Exonuclease</keyword>
<keyword id="KW-0378">Hydrolase</keyword>
<keyword id="KW-0540">Nuclease</keyword>
<keyword id="KW-1185">Reference proteome</keyword>
<feature type="chain" id="PRO_0000206948" description="Exodeoxyribonuclease 7 small subunit">
    <location>
        <begin position="1"/>
        <end position="76"/>
    </location>
</feature>
<comment type="function">
    <text evidence="1">Bidirectionally degrades single-stranded DNA into large acid-insoluble oligonucleotides, which are then degraded further into small acid-soluble oligonucleotides.</text>
</comment>
<comment type="catalytic activity">
    <reaction evidence="1">
        <text>Exonucleolytic cleavage in either 5'- to 3'- or 3'- to 5'-direction to yield nucleoside 5'-phosphates.</text>
        <dbReference type="EC" id="3.1.11.6"/>
    </reaction>
</comment>
<comment type="subunit">
    <text evidence="1">Heterooligomer composed of large and small subunits.</text>
</comment>
<comment type="subcellular location">
    <subcellularLocation>
        <location evidence="1">Cytoplasm</location>
    </subcellularLocation>
</comment>
<comment type="similarity">
    <text evidence="1">Belongs to the XseB family.</text>
</comment>
<proteinExistence type="inferred from homology"/>
<sequence>MPAKEKTFEESLNALEEIVQRLERGDVPLEEALAAFQEGMALSKQCQDTLEKAEKTLTKMMTENNEEIVFEESEEA</sequence>
<evidence type="ECO:0000255" key="1">
    <source>
        <dbReference type="HAMAP-Rule" id="MF_00337"/>
    </source>
</evidence>
<protein>
    <recommendedName>
        <fullName evidence="1">Exodeoxyribonuclease 7 small subunit</fullName>
        <ecNumber evidence="1">3.1.11.6</ecNumber>
    </recommendedName>
    <alternativeName>
        <fullName evidence="1">Exodeoxyribonuclease VII small subunit</fullName>
        <shortName evidence="1">Exonuclease VII small subunit</shortName>
    </alternativeName>
</protein>
<reference key="1">
    <citation type="journal article" date="2003" name="Science">
        <title>Role of mobile DNA in the evolution of vancomycin-resistant Enterococcus faecalis.</title>
        <authorList>
            <person name="Paulsen I.T."/>
            <person name="Banerjei L."/>
            <person name="Myers G.S.A."/>
            <person name="Nelson K.E."/>
            <person name="Seshadri R."/>
            <person name="Read T.D."/>
            <person name="Fouts D.E."/>
            <person name="Eisen J.A."/>
            <person name="Gill S.R."/>
            <person name="Heidelberg J.F."/>
            <person name="Tettelin H."/>
            <person name="Dodson R.J."/>
            <person name="Umayam L.A."/>
            <person name="Brinkac L.M."/>
            <person name="Beanan M.J."/>
            <person name="Daugherty S.C."/>
            <person name="DeBoy R.T."/>
            <person name="Durkin S.A."/>
            <person name="Kolonay J.F."/>
            <person name="Madupu R."/>
            <person name="Nelson W.C."/>
            <person name="Vamathevan J.J."/>
            <person name="Tran B."/>
            <person name="Upton J."/>
            <person name="Hansen T."/>
            <person name="Shetty J."/>
            <person name="Khouri H.M."/>
            <person name="Utterback T.R."/>
            <person name="Radune D."/>
            <person name="Ketchum K.A."/>
            <person name="Dougherty B.A."/>
            <person name="Fraser C.M."/>
        </authorList>
    </citation>
    <scope>NUCLEOTIDE SEQUENCE [LARGE SCALE GENOMIC DNA]</scope>
    <source>
        <strain>ATCC 700802 / V583</strain>
    </source>
</reference>